<keyword id="KW-0067">ATP-binding</keyword>
<keyword id="KW-0963">Cytoplasm</keyword>
<keyword id="KW-0418">Kinase</keyword>
<keyword id="KW-0460">Magnesium</keyword>
<keyword id="KW-0479">Metal-binding</keyword>
<keyword id="KW-0547">Nucleotide-binding</keyword>
<keyword id="KW-1185">Reference proteome</keyword>
<keyword id="KW-0808">Transferase</keyword>
<feature type="chain" id="PRO_1000002239" description="Acetate kinase">
    <location>
        <begin position="1"/>
        <end position="404"/>
    </location>
</feature>
<feature type="active site" description="Proton donor/acceptor" evidence="1">
    <location>
        <position position="152"/>
    </location>
</feature>
<feature type="binding site" evidence="1">
    <location>
        <position position="7"/>
    </location>
    <ligand>
        <name>Mg(2+)</name>
        <dbReference type="ChEBI" id="CHEBI:18420"/>
    </ligand>
</feature>
<feature type="binding site" evidence="1">
    <location>
        <position position="14"/>
    </location>
    <ligand>
        <name>ATP</name>
        <dbReference type="ChEBI" id="CHEBI:30616"/>
    </ligand>
</feature>
<feature type="binding site" evidence="1">
    <location>
        <position position="95"/>
    </location>
    <ligand>
        <name>substrate</name>
    </ligand>
</feature>
<feature type="binding site" evidence="1">
    <location>
        <begin position="212"/>
        <end position="216"/>
    </location>
    <ligand>
        <name>ATP</name>
        <dbReference type="ChEBI" id="CHEBI:30616"/>
    </ligand>
</feature>
<feature type="binding site" evidence="1">
    <location>
        <begin position="286"/>
        <end position="288"/>
    </location>
    <ligand>
        <name>ATP</name>
        <dbReference type="ChEBI" id="CHEBI:30616"/>
    </ligand>
</feature>
<feature type="binding site" evidence="1">
    <location>
        <begin position="334"/>
        <end position="338"/>
    </location>
    <ligand>
        <name>ATP</name>
        <dbReference type="ChEBI" id="CHEBI:30616"/>
    </ligand>
</feature>
<feature type="binding site" evidence="1">
    <location>
        <position position="388"/>
    </location>
    <ligand>
        <name>Mg(2+)</name>
        <dbReference type="ChEBI" id="CHEBI:18420"/>
    </ligand>
</feature>
<feature type="site" description="Transition state stabilizer" evidence="1">
    <location>
        <position position="184"/>
    </location>
</feature>
<feature type="site" description="Transition state stabilizer" evidence="1">
    <location>
        <position position="245"/>
    </location>
</feature>
<sequence length="404" mass="44888">MKVLVINTGSSSFKYQLIDMPMEQVLVSGLVERIGEEVGQMVHKIYPNTSQEKKYTTTQPFSTHVEGMQAVVAELINPKHGILHSVKEIYAIGHRVVMGGETMKHPALINQHVKNIIRECAIFSPLHNLSHLAGIETAEELFPGIPNVAVFDSEFHQTMPKVAYLYPLPYDIYDDYKIRRYGFHGTSHRYVAQQTANFLNRPIKELNFITCHLGNGCSMTAIKNGKSIDTSMGLTPLDGLMMGTRCGDIDPAIVPFLIEKTEKSAKDVDELMNKQSGLKGICGMNDMRDIHEACAQGNAKAQLALDMFIYRIKKYLGAYYAILGHLDGIIFTAGIGENDTIVREKVCSGLENLGIFLDSSRNNTHSSTLRLISTDNSPIPIFVVPTNEELEIAKLTIQLVSNTQ</sequence>
<evidence type="ECO:0000255" key="1">
    <source>
        <dbReference type="HAMAP-Rule" id="MF_00020"/>
    </source>
</evidence>
<reference key="1">
    <citation type="submission" date="2005-11" db="EMBL/GenBank/DDBJ databases">
        <title>The complete genome sequence of Lawsonia intracellularis: the causative agent of proliferative enteropathy.</title>
        <authorList>
            <person name="Kaur K."/>
            <person name="Zhang Q."/>
            <person name="Beckler D."/>
            <person name="Munir S."/>
            <person name="Li L."/>
            <person name="Kinsley K."/>
            <person name="Herron L."/>
            <person name="Peterson A."/>
            <person name="May B."/>
            <person name="Singh S."/>
            <person name="Gebhart C."/>
            <person name="Kapur V."/>
        </authorList>
    </citation>
    <scope>NUCLEOTIDE SEQUENCE [LARGE SCALE GENOMIC DNA]</scope>
    <source>
        <strain>PHE/MN1-00</strain>
    </source>
</reference>
<comment type="function">
    <text evidence="1">Catalyzes the formation of acetyl phosphate from acetate and ATP. Can also catalyze the reverse reaction.</text>
</comment>
<comment type="catalytic activity">
    <reaction evidence="1">
        <text>acetate + ATP = acetyl phosphate + ADP</text>
        <dbReference type="Rhea" id="RHEA:11352"/>
        <dbReference type="ChEBI" id="CHEBI:22191"/>
        <dbReference type="ChEBI" id="CHEBI:30089"/>
        <dbReference type="ChEBI" id="CHEBI:30616"/>
        <dbReference type="ChEBI" id="CHEBI:456216"/>
        <dbReference type="EC" id="2.7.2.1"/>
    </reaction>
</comment>
<comment type="cofactor">
    <cofactor evidence="1">
        <name>Mg(2+)</name>
        <dbReference type="ChEBI" id="CHEBI:18420"/>
    </cofactor>
    <cofactor evidence="1">
        <name>Mn(2+)</name>
        <dbReference type="ChEBI" id="CHEBI:29035"/>
    </cofactor>
    <text evidence="1">Mg(2+). Can also accept Mn(2+).</text>
</comment>
<comment type="pathway">
    <text evidence="1">Metabolic intermediate biosynthesis; acetyl-CoA biosynthesis; acetyl-CoA from acetate: step 1/2.</text>
</comment>
<comment type="subunit">
    <text evidence="1">Homodimer.</text>
</comment>
<comment type="subcellular location">
    <subcellularLocation>
        <location evidence="1">Cytoplasm</location>
    </subcellularLocation>
</comment>
<comment type="similarity">
    <text evidence="1">Belongs to the acetokinase family.</text>
</comment>
<name>ACKA_LAWIP</name>
<dbReference type="EC" id="2.7.2.1" evidence="1"/>
<dbReference type="EMBL" id="AM180252">
    <property type="protein sequence ID" value="CAJ54336.1"/>
    <property type="molecule type" value="Genomic_DNA"/>
</dbReference>
<dbReference type="RefSeq" id="WP_011526365.1">
    <property type="nucleotide sequence ID" value="NC_008011.1"/>
</dbReference>
<dbReference type="SMR" id="Q1MRP0"/>
<dbReference type="STRING" id="363253.LI0280"/>
<dbReference type="KEGG" id="lip:LI0280"/>
<dbReference type="eggNOG" id="COG0282">
    <property type="taxonomic scope" value="Bacteria"/>
</dbReference>
<dbReference type="HOGENOM" id="CLU_020352_0_1_7"/>
<dbReference type="OrthoDB" id="9802453at2"/>
<dbReference type="UniPathway" id="UPA00340">
    <property type="reaction ID" value="UER00458"/>
</dbReference>
<dbReference type="Proteomes" id="UP000002430">
    <property type="component" value="Chromosome"/>
</dbReference>
<dbReference type="GO" id="GO:0005737">
    <property type="term" value="C:cytoplasm"/>
    <property type="evidence" value="ECO:0007669"/>
    <property type="project" value="UniProtKB-SubCell"/>
</dbReference>
<dbReference type="GO" id="GO:0008776">
    <property type="term" value="F:acetate kinase activity"/>
    <property type="evidence" value="ECO:0007669"/>
    <property type="project" value="UniProtKB-UniRule"/>
</dbReference>
<dbReference type="GO" id="GO:0005524">
    <property type="term" value="F:ATP binding"/>
    <property type="evidence" value="ECO:0007669"/>
    <property type="project" value="UniProtKB-KW"/>
</dbReference>
<dbReference type="GO" id="GO:0000287">
    <property type="term" value="F:magnesium ion binding"/>
    <property type="evidence" value="ECO:0007669"/>
    <property type="project" value="UniProtKB-UniRule"/>
</dbReference>
<dbReference type="GO" id="GO:0006083">
    <property type="term" value="P:acetate metabolic process"/>
    <property type="evidence" value="ECO:0007669"/>
    <property type="project" value="TreeGrafter"/>
</dbReference>
<dbReference type="GO" id="GO:0006085">
    <property type="term" value="P:acetyl-CoA biosynthetic process"/>
    <property type="evidence" value="ECO:0007669"/>
    <property type="project" value="UniProtKB-UniRule"/>
</dbReference>
<dbReference type="CDD" id="cd24010">
    <property type="entry name" value="ASKHA_NBD_AcK_PK"/>
    <property type="match status" value="1"/>
</dbReference>
<dbReference type="Gene3D" id="3.30.420.40">
    <property type="match status" value="2"/>
</dbReference>
<dbReference type="HAMAP" id="MF_00020">
    <property type="entry name" value="Acetate_kinase"/>
    <property type="match status" value="1"/>
</dbReference>
<dbReference type="InterPro" id="IPR004372">
    <property type="entry name" value="Ac/propionate_kinase"/>
</dbReference>
<dbReference type="InterPro" id="IPR000890">
    <property type="entry name" value="Aliphatic_acid_kin_short-chain"/>
</dbReference>
<dbReference type="InterPro" id="IPR023865">
    <property type="entry name" value="Aliphatic_acid_kinase_CS"/>
</dbReference>
<dbReference type="InterPro" id="IPR043129">
    <property type="entry name" value="ATPase_NBD"/>
</dbReference>
<dbReference type="NCBIfam" id="TIGR00016">
    <property type="entry name" value="ackA"/>
    <property type="match status" value="1"/>
</dbReference>
<dbReference type="PANTHER" id="PTHR21060">
    <property type="entry name" value="ACETATE KINASE"/>
    <property type="match status" value="1"/>
</dbReference>
<dbReference type="PANTHER" id="PTHR21060:SF15">
    <property type="entry name" value="ACETATE KINASE-RELATED"/>
    <property type="match status" value="1"/>
</dbReference>
<dbReference type="Pfam" id="PF00871">
    <property type="entry name" value="Acetate_kinase"/>
    <property type="match status" value="1"/>
</dbReference>
<dbReference type="PIRSF" id="PIRSF000722">
    <property type="entry name" value="Acetate_prop_kin"/>
    <property type="match status" value="1"/>
</dbReference>
<dbReference type="PRINTS" id="PR00471">
    <property type="entry name" value="ACETATEKNASE"/>
</dbReference>
<dbReference type="SUPFAM" id="SSF53067">
    <property type="entry name" value="Actin-like ATPase domain"/>
    <property type="match status" value="2"/>
</dbReference>
<dbReference type="PROSITE" id="PS01075">
    <property type="entry name" value="ACETATE_KINASE_1"/>
    <property type="match status" value="1"/>
</dbReference>
<dbReference type="PROSITE" id="PS01076">
    <property type="entry name" value="ACETATE_KINASE_2"/>
    <property type="match status" value="1"/>
</dbReference>
<proteinExistence type="inferred from homology"/>
<organism>
    <name type="scientific">Lawsonia intracellularis (strain PHE/MN1-00)</name>
    <dbReference type="NCBI Taxonomy" id="363253"/>
    <lineage>
        <taxon>Bacteria</taxon>
        <taxon>Pseudomonadati</taxon>
        <taxon>Thermodesulfobacteriota</taxon>
        <taxon>Desulfovibrionia</taxon>
        <taxon>Desulfovibrionales</taxon>
        <taxon>Desulfovibrionaceae</taxon>
        <taxon>Lawsonia</taxon>
    </lineage>
</organism>
<protein>
    <recommendedName>
        <fullName evidence="1">Acetate kinase</fullName>
        <ecNumber evidence="1">2.7.2.1</ecNumber>
    </recommendedName>
    <alternativeName>
        <fullName evidence="1">Acetokinase</fullName>
    </alternativeName>
</protein>
<gene>
    <name evidence="1" type="primary">ackA</name>
    <name type="ordered locus">LI0280</name>
</gene>
<accession>Q1MRP0</accession>